<proteinExistence type="inferred from homology"/>
<gene>
    <name evidence="1" type="primary">rsmB</name>
    <name evidence="1" type="synonym">sun</name>
    <name type="ordered locus">SPA3275</name>
</gene>
<accession>Q5PIT6</accession>
<keyword id="KW-0963">Cytoplasm</keyword>
<keyword id="KW-0489">Methyltransferase</keyword>
<keyword id="KW-0694">RNA-binding</keyword>
<keyword id="KW-0698">rRNA processing</keyword>
<keyword id="KW-0949">S-adenosyl-L-methionine</keyword>
<keyword id="KW-0808">Transferase</keyword>
<evidence type="ECO:0000255" key="1">
    <source>
        <dbReference type="HAMAP-Rule" id="MF_01856"/>
    </source>
</evidence>
<evidence type="ECO:0000256" key="2">
    <source>
        <dbReference type="SAM" id="MobiDB-lite"/>
    </source>
</evidence>
<dbReference type="EC" id="2.1.1.176" evidence="1"/>
<dbReference type="EMBL" id="CP000026">
    <property type="protein sequence ID" value="AAV79091.1"/>
    <property type="molecule type" value="Genomic_DNA"/>
</dbReference>
<dbReference type="RefSeq" id="WP_000744613.1">
    <property type="nucleotide sequence ID" value="NC_006511.1"/>
</dbReference>
<dbReference type="SMR" id="Q5PIT6"/>
<dbReference type="KEGG" id="spt:SPA3275"/>
<dbReference type="HOGENOM" id="CLU_005316_0_4_6"/>
<dbReference type="Proteomes" id="UP000008185">
    <property type="component" value="Chromosome"/>
</dbReference>
<dbReference type="GO" id="GO:0005829">
    <property type="term" value="C:cytosol"/>
    <property type="evidence" value="ECO:0007669"/>
    <property type="project" value="TreeGrafter"/>
</dbReference>
<dbReference type="GO" id="GO:0003723">
    <property type="term" value="F:RNA binding"/>
    <property type="evidence" value="ECO:0007669"/>
    <property type="project" value="UniProtKB-KW"/>
</dbReference>
<dbReference type="GO" id="GO:0009383">
    <property type="term" value="F:rRNA (cytosine-C5-)-methyltransferase activity"/>
    <property type="evidence" value="ECO:0007669"/>
    <property type="project" value="TreeGrafter"/>
</dbReference>
<dbReference type="GO" id="GO:0006355">
    <property type="term" value="P:regulation of DNA-templated transcription"/>
    <property type="evidence" value="ECO:0007669"/>
    <property type="project" value="InterPro"/>
</dbReference>
<dbReference type="GO" id="GO:0070475">
    <property type="term" value="P:rRNA base methylation"/>
    <property type="evidence" value="ECO:0007669"/>
    <property type="project" value="TreeGrafter"/>
</dbReference>
<dbReference type="CDD" id="cd02440">
    <property type="entry name" value="AdoMet_MTases"/>
    <property type="match status" value="1"/>
</dbReference>
<dbReference type="CDD" id="cd00620">
    <property type="entry name" value="Methyltransferase_Sun"/>
    <property type="match status" value="1"/>
</dbReference>
<dbReference type="FunFam" id="1.10.287.730:FF:000001">
    <property type="entry name" value="Ribosomal RNA small subunit methyltransferase B"/>
    <property type="match status" value="1"/>
</dbReference>
<dbReference type="FunFam" id="1.10.940.10:FF:000002">
    <property type="entry name" value="Ribosomal RNA small subunit methyltransferase B"/>
    <property type="match status" value="1"/>
</dbReference>
<dbReference type="FunFam" id="3.30.70.1170:FF:000002">
    <property type="entry name" value="Ribosomal RNA small subunit methyltransferase B"/>
    <property type="match status" value="1"/>
</dbReference>
<dbReference type="FunFam" id="3.40.50.150:FF:000022">
    <property type="entry name" value="Ribosomal RNA small subunit methyltransferase B"/>
    <property type="match status" value="1"/>
</dbReference>
<dbReference type="Gene3D" id="1.10.287.730">
    <property type="entry name" value="Helix hairpin bin"/>
    <property type="match status" value="1"/>
</dbReference>
<dbReference type="Gene3D" id="1.10.940.10">
    <property type="entry name" value="NusB-like"/>
    <property type="match status" value="1"/>
</dbReference>
<dbReference type="Gene3D" id="3.30.70.1170">
    <property type="entry name" value="Sun protein, domain 3"/>
    <property type="match status" value="1"/>
</dbReference>
<dbReference type="Gene3D" id="3.40.50.150">
    <property type="entry name" value="Vaccinia Virus protein VP39"/>
    <property type="match status" value="1"/>
</dbReference>
<dbReference type="HAMAP" id="MF_01856">
    <property type="entry name" value="16SrRNA_methyltr_B"/>
    <property type="match status" value="1"/>
</dbReference>
<dbReference type="InterPro" id="IPR049560">
    <property type="entry name" value="MeTrfase_RsmB-F_NOP2_cat"/>
</dbReference>
<dbReference type="InterPro" id="IPR001678">
    <property type="entry name" value="MeTrfase_RsmB-F_NOP2_dom"/>
</dbReference>
<dbReference type="InterPro" id="IPR035926">
    <property type="entry name" value="NusB-like_sf"/>
</dbReference>
<dbReference type="InterPro" id="IPR006027">
    <property type="entry name" value="NusB_RsmB_TIM44"/>
</dbReference>
<dbReference type="InterPro" id="IPR023267">
    <property type="entry name" value="RCMT"/>
</dbReference>
<dbReference type="InterPro" id="IPR004573">
    <property type="entry name" value="rRNA_ssu_MeTfrase_B"/>
</dbReference>
<dbReference type="InterPro" id="IPR023541">
    <property type="entry name" value="rRNA_ssu_MeTfrase_B_ent"/>
</dbReference>
<dbReference type="InterPro" id="IPR054728">
    <property type="entry name" value="RsmB-like_ferredoxin"/>
</dbReference>
<dbReference type="InterPro" id="IPR048019">
    <property type="entry name" value="RsmB-like_N"/>
</dbReference>
<dbReference type="InterPro" id="IPR018314">
    <property type="entry name" value="RsmB/NOL1/NOP2-like_CS"/>
</dbReference>
<dbReference type="InterPro" id="IPR029063">
    <property type="entry name" value="SAM-dependent_MTases_sf"/>
</dbReference>
<dbReference type="NCBIfam" id="NF008149">
    <property type="entry name" value="PRK10901.1"/>
    <property type="match status" value="1"/>
</dbReference>
<dbReference type="NCBIfam" id="NF011494">
    <property type="entry name" value="PRK14902.1"/>
    <property type="match status" value="1"/>
</dbReference>
<dbReference type="NCBIfam" id="TIGR00563">
    <property type="entry name" value="rsmB"/>
    <property type="match status" value="1"/>
</dbReference>
<dbReference type="PANTHER" id="PTHR22807:SF61">
    <property type="entry name" value="NOL1_NOP2_SUN FAMILY PROTEIN _ ANTITERMINATION NUSB DOMAIN-CONTAINING PROTEIN"/>
    <property type="match status" value="1"/>
</dbReference>
<dbReference type="PANTHER" id="PTHR22807">
    <property type="entry name" value="NOP2 YEAST -RELATED NOL1/NOP2/FMU SUN DOMAIN-CONTAINING"/>
    <property type="match status" value="1"/>
</dbReference>
<dbReference type="Pfam" id="PF01189">
    <property type="entry name" value="Methyltr_RsmB-F"/>
    <property type="match status" value="1"/>
</dbReference>
<dbReference type="Pfam" id="PF01029">
    <property type="entry name" value="NusB"/>
    <property type="match status" value="1"/>
</dbReference>
<dbReference type="Pfam" id="PF22458">
    <property type="entry name" value="RsmF-B_ferredox"/>
    <property type="match status" value="1"/>
</dbReference>
<dbReference type="PRINTS" id="PR02008">
    <property type="entry name" value="RCMTFAMILY"/>
</dbReference>
<dbReference type="SUPFAM" id="SSF48013">
    <property type="entry name" value="NusB-like"/>
    <property type="match status" value="1"/>
</dbReference>
<dbReference type="SUPFAM" id="SSF53335">
    <property type="entry name" value="S-adenosyl-L-methionine-dependent methyltransferases"/>
    <property type="match status" value="1"/>
</dbReference>
<dbReference type="PROSITE" id="PS01153">
    <property type="entry name" value="NOL1_NOP2_SUN"/>
    <property type="match status" value="1"/>
</dbReference>
<dbReference type="PROSITE" id="PS51686">
    <property type="entry name" value="SAM_MT_RSMB_NOP"/>
    <property type="match status" value="1"/>
</dbReference>
<organism>
    <name type="scientific">Salmonella paratyphi A (strain ATCC 9150 / SARB42)</name>
    <dbReference type="NCBI Taxonomy" id="295319"/>
    <lineage>
        <taxon>Bacteria</taxon>
        <taxon>Pseudomonadati</taxon>
        <taxon>Pseudomonadota</taxon>
        <taxon>Gammaproteobacteria</taxon>
        <taxon>Enterobacterales</taxon>
        <taxon>Enterobacteriaceae</taxon>
        <taxon>Salmonella</taxon>
    </lineage>
</organism>
<name>RSMB_SALPA</name>
<sequence length="429" mass="48144">MKKQNNLRSLAAQAVEQVVEQGQSLSNVLPPLQQKVADKDKALLQELCFGVLRTLSQLEWLINKLMSRPMTGKQRTVHYLIMVGFYQLLYTRVPPHAALAETVEGAVSIKRPQLKGLINGVLRQFQRQQETLLNEFATSDARFLHPGWLVKRLQNAYPTQWQRIIEANNQRPPMWLRVNRTHHTRDGWLGLLEDAGMKGYPHPDYPDAVRLETPAPVHALPGFAEGWVTVQDASAQGCAVFLAPQNGEHILDLCAAPGGKTTHILEVAPEADVLAVDIDEQRLSRVYDNLKRLGMKATVKQGDGRYPAQWCGEQQFDRILLDAPCSATGVIRRHPDIKWLRRDRDIAELAQLQAEILDTVWPRLKPGGTLVYATCSVLPEENRDQIKTFLQRTPDAALSETGTPDQPGQQNLPGGEEGDGFFYAKLIKK</sequence>
<reference key="1">
    <citation type="journal article" date="2004" name="Nat. Genet.">
        <title>Comparison of genome degradation in Paratyphi A and Typhi, human-restricted serovars of Salmonella enterica that cause typhoid.</title>
        <authorList>
            <person name="McClelland M."/>
            <person name="Sanderson K.E."/>
            <person name="Clifton S.W."/>
            <person name="Latreille P."/>
            <person name="Porwollik S."/>
            <person name="Sabo A."/>
            <person name="Meyer R."/>
            <person name="Bieri T."/>
            <person name="Ozersky P."/>
            <person name="McLellan M."/>
            <person name="Harkins C.R."/>
            <person name="Wang C."/>
            <person name="Nguyen C."/>
            <person name="Berghoff A."/>
            <person name="Elliott G."/>
            <person name="Kohlberg S."/>
            <person name="Strong C."/>
            <person name="Du F."/>
            <person name="Carter J."/>
            <person name="Kremizki C."/>
            <person name="Layman D."/>
            <person name="Leonard S."/>
            <person name="Sun H."/>
            <person name="Fulton L."/>
            <person name="Nash W."/>
            <person name="Miner T."/>
            <person name="Minx P."/>
            <person name="Delehaunty K."/>
            <person name="Fronick C."/>
            <person name="Magrini V."/>
            <person name="Nhan M."/>
            <person name="Warren W."/>
            <person name="Florea L."/>
            <person name="Spieth J."/>
            <person name="Wilson R.K."/>
        </authorList>
    </citation>
    <scope>NUCLEOTIDE SEQUENCE [LARGE SCALE GENOMIC DNA]</scope>
    <source>
        <strain>ATCC 9150 / SARB42</strain>
    </source>
</reference>
<feature type="chain" id="PRO_0000366171" description="Ribosomal RNA small subunit methyltransferase B">
    <location>
        <begin position="1"/>
        <end position="429"/>
    </location>
</feature>
<feature type="region of interest" description="Disordered" evidence="2">
    <location>
        <begin position="397"/>
        <end position="419"/>
    </location>
</feature>
<feature type="compositionally biased region" description="Polar residues" evidence="2">
    <location>
        <begin position="400"/>
        <end position="412"/>
    </location>
</feature>
<feature type="active site" description="Nucleophile" evidence="1">
    <location>
        <position position="375"/>
    </location>
</feature>
<feature type="binding site" evidence="1">
    <location>
        <begin position="254"/>
        <end position="260"/>
    </location>
    <ligand>
        <name>S-adenosyl-L-methionine</name>
        <dbReference type="ChEBI" id="CHEBI:59789"/>
    </ligand>
</feature>
<feature type="binding site" evidence="1">
    <location>
        <position position="277"/>
    </location>
    <ligand>
        <name>S-adenosyl-L-methionine</name>
        <dbReference type="ChEBI" id="CHEBI:59789"/>
    </ligand>
</feature>
<feature type="binding site" evidence="1">
    <location>
        <position position="303"/>
    </location>
    <ligand>
        <name>S-adenosyl-L-methionine</name>
        <dbReference type="ChEBI" id="CHEBI:59789"/>
    </ligand>
</feature>
<feature type="binding site" evidence="1">
    <location>
        <position position="322"/>
    </location>
    <ligand>
        <name>S-adenosyl-L-methionine</name>
        <dbReference type="ChEBI" id="CHEBI:59789"/>
    </ligand>
</feature>
<protein>
    <recommendedName>
        <fullName evidence="1">Ribosomal RNA small subunit methyltransferase B</fullName>
        <ecNumber evidence="1">2.1.1.176</ecNumber>
    </recommendedName>
    <alternativeName>
        <fullName evidence="1">16S rRNA m5C967 methyltransferase</fullName>
    </alternativeName>
    <alternativeName>
        <fullName evidence="1">rRNA (cytosine-C(5)-)-methyltransferase RsmB</fullName>
    </alternativeName>
</protein>
<comment type="function">
    <text evidence="1">Specifically methylates the cytosine at position 967 (m5C967) of 16S rRNA.</text>
</comment>
<comment type="catalytic activity">
    <reaction evidence="1">
        <text>cytidine(967) in 16S rRNA + S-adenosyl-L-methionine = 5-methylcytidine(967) in 16S rRNA + S-adenosyl-L-homocysteine + H(+)</text>
        <dbReference type="Rhea" id="RHEA:42748"/>
        <dbReference type="Rhea" id="RHEA-COMP:10219"/>
        <dbReference type="Rhea" id="RHEA-COMP:10220"/>
        <dbReference type="ChEBI" id="CHEBI:15378"/>
        <dbReference type="ChEBI" id="CHEBI:57856"/>
        <dbReference type="ChEBI" id="CHEBI:59789"/>
        <dbReference type="ChEBI" id="CHEBI:74483"/>
        <dbReference type="ChEBI" id="CHEBI:82748"/>
        <dbReference type="EC" id="2.1.1.176"/>
    </reaction>
</comment>
<comment type="subcellular location">
    <subcellularLocation>
        <location evidence="1">Cytoplasm</location>
    </subcellularLocation>
</comment>
<comment type="similarity">
    <text evidence="1">Belongs to the class I-like SAM-binding methyltransferase superfamily. RsmB/NOP family.</text>
</comment>